<comment type="function">
    <text evidence="1">Catalyzes the reduction of the macrocycle of cobalt-precorrin-6A to cobalt-precorrin-6B.</text>
</comment>
<comment type="catalytic activity">
    <reaction>
        <text>Co-precorrin-6B + NAD(+) = Co-precorrin-6A + NADH + H(+)</text>
        <dbReference type="Rhea" id="RHEA:15625"/>
        <dbReference type="ChEBI" id="CHEBI:15378"/>
        <dbReference type="ChEBI" id="CHEBI:57540"/>
        <dbReference type="ChEBI" id="CHEBI:57945"/>
        <dbReference type="ChEBI" id="CHEBI:60064"/>
        <dbReference type="ChEBI" id="CHEBI:72780"/>
        <dbReference type="EC" id="1.3.1.106"/>
    </reaction>
</comment>
<comment type="pathway">
    <text>Cofactor biosynthesis; adenosylcobalamin biosynthesis; cob(II)yrinate a,c-diamide from sirohydrochlorin (anaerobic route): step 7/10.</text>
</comment>
<comment type="similarity">
    <text evidence="2">Belongs to the precorrin-6x reductase family.</text>
</comment>
<gene>
    <name type="primary">cbiJ</name>
    <name type="ordered locus">STM2026</name>
</gene>
<organism>
    <name type="scientific">Salmonella typhimurium (strain LT2 / SGSC1412 / ATCC 700720)</name>
    <dbReference type="NCBI Taxonomy" id="99287"/>
    <lineage>
        <taxon>Bacteria</taxon>
        <taxon>Pseudomonadati</taxon>
        <taxon>Pseudomonadota</taxon>
        <taxon>Gammaproteobacteria</taxon>
        <taxon>Enterobacterales</taxon>
        <taxon>Enterobacteriaceae</taxon>
        <taxon>Salmonella</taxon>
    </lineage>
</organism>
<keyword id="KW-0169">Cobalamin biosynthesis</keyword>
<keyword id="KW-0520">NAD</keyword>
<keyword id="KW-0560">Oxidoreductase</keyword>
<keyword id="KW-1185">Reference proteome</keyword>
<sequence length="263" mass="28403">MNEGDVLVVGGTSDARALCRQLDAANVAYTLSVATPAGKALAGDIKGQVRCGRLEYGQMVAWLKENRTRWVIDASHPYAEMVSHNLLRACETAGVLLSRYQRPEQLSNLTHPLLYTARSIADACEIARRFGPRVLLTTGSKDLAVWRAGLAEKTLLARVLPVAEVIQRCSELGFGVGEIFALCGPFSADFNAAFYHQCRADVVITKASGAEGGYQEKVQPCLDAGIPCIVIARPTPLVTGDELLESQAAFAQRLSRWLAAAKE</sequence>
<evidence type="ECO:0000250" key="1"/>
<evidence type="ECO:0000255" key="2">
    <source>
        <dbReference type="PROSITE-ProRule" id="PRU00356"/>
    </source>
</evidence>
<dbReference type="EC" id="1.3.1.106"/>
<dbReference type="EMBL" id="L12006">
    <property type="protein sequence ID" value="AAA27261.1"/>
    <property type="molecule type" value="Genomic_DNA"/>
</dbReference>
<dbReference type="EMBL" id="AE006468">
    <property type="protein sequence ID" value="AAL20930.1"/>
    <property type="molecule type" value="Genomic_DNA"/>
</dbReference>
<dbReference type="RefSeq" id="NP_460971.1">
    <property type="nucleotide sequence ID" value="NC_003197.2"/>
</dbReference>
<dbReference type="RefSeq" id="WP_001001975.1">
    <property type="nucleotide sequence ID" value="NC_003197.2"/>
</dbReference>
<dbReference type="SMR" id="Q05591"/>
<dbReference type="STRING" id="99287.STM2026"/>
<dbReference type="PaxDb" id="99287-STM2026"/>
<dbReference type="GeneID" id="1253547"/>
<dbReference type="KEGG" id="stm:STM2026"/>
<dbReference type="PATRIC" id="fig|99287.12.peg.2148"/>
<dbReference type="HOGENOM" id="CLU_068627_0_0_6"/>
<dbReference type="OMA" id="THPYAAQ"/>
<dbReference type="PhylomeDB" id="Q05591"/>
<dbReference type="BioCyc" id="MetaCyc:MONOMER-13224"/>
<dbReference type="BioCyc" id="SENT99287:STM2026-MONOMER"/>
<dbReference type="UniPathway" id="UPA00148">
    <property type="reaction ID" value="UER00228"/>
</dbReference>
<dbReference type="Proteomes" id="UP000001014">
    <property type="component" value="Chromosome"/>
</dbReference>
<dbReference type="GO" id="GO:0016994">
    <property type="term" value="F:precorrin-6A reductase activity"/>
    <property type="evidence" value="ECO:0007669"/>
    <property type="project" value="InterPro"/>
</dbReference>
<dbReference type="GO" id="GO:0009236">
    <property type="term" value="P:cobalamin biosynthetic process"/>
    <property type="evidence" value="ECO:0007669"/>
    <property type="project" value="UniProtKB-UniPathway"/>
</dbReference>
<dbReference type="InterPro" id="IPR003723">
    <property type="entry name" value="Precorrin-6x_reduct"/>
</dbReference>
<dbReference type="NCBIfam" id="TIGR00715">
    <property type="entry name" value="precor6x_red"/>
    <property type="match status" value="1"/>
</dbReference>
<dbReference type="NCBIfam" id="NF005967">
    <property type="entry name" value="PRK08057.1-1"/>
    <property type="match status" value="1"/>
</dbReference>
<dbReference type="PANTHER" id="PTHR36925">
    <property type="entry name" value="COBALT-PRECORRIN-6A REDUCTASE"/>
    <property type="match status" value="1"/>
</dbReference>
<dbReference type="PANTHER" id="PTHR36925:SF1">
    <property type="entry name" value="COBALT-PRECORRIN-6A REDUCTASE"/>
    <property type="match status" value="1"/>
</dbReference>
<dbReference type="Pfam" id="PF02571">
    <property type="entry name" value="CbiJ"/>
    <property type="match status" value="1"/>
</dbReference>
<dbReference type="PROSITE" id="PS51014">
    <property type="entry name" value="COBK_CBIJ"/>
    <property type="match status" value="1"/>
</dbReference>
<name>CBIJ_SALTY</name>
<feature type="chain" id="PRO_0000135915" description="Cobalt-precorrin-6A reductase">
    <location>
        <begin position="1"/>
        <end position="263"/>
    </location>
</feature>
<proteinExistence type="inferred from homology"/>
<accession>Q05591</accession>
<reference key="1">
    <citation type="journal article" date="1993" name="J. Bacteriol.">
        <title>Characterization of the cobalamin (vitamin B12) biosynthetic genes of Salmonella typhimurium.</title>
        <authorList>
            <person name="Roth J.R."/>
            <person name="Lawrence J.G."/>
            <person name="Rubenfield M."/>
            <person name="Kieffer-Higgins S."/>
            <person name="Church G.M."/>
        </authorList>
    </citation>
    <scope>NUCLEOTIDE SEQUENCE [GENOMIC DNA]</scope>
    <source>
        <strain>LT2</strain>
    </source>
</reference>
<reference key="2">
    <citation type="journal article" date="2001" name="Nature">
        <title>Complete genome sequence of Salmonella enterica serovar Typhimurium LT2.</title>
        <authorList>
            <person name="McClelland M."/>
            <person name="Sanderson K.E."/>
            <person name="Spieth J."/>
            <person name="Clifton S.W."/>
            <person name="Latreille P."/>
            <person name="Courtney L."/>
            <person name="Porwollik S."/>
            <person name="Ali J."/>
            <person name="Dante M."/>
            <person name="Du F."/>
            <person name="Hou S."/>
            <person name="Layman D."/>
            <person name="Leonard S."/>
            <person name="Nguyen C."/>
            <person name="Scott K."/>
            <person name="Holmes A."/>
            <person name="Grewal N."/>
            <person name="Mulvaney E."/>
            <person name="Ryan E."/>
            <person name="Sun H."/>
            <person name="Florea L."/>
            <person name="Miller W."/>
            <person name="Stoneking T."/>
            <person name="Nhan M."/>
            <person name="Waterston R."/>
            <person name="Wilson R.K."/>
        </authorList>
    </citation>
    <scope>NUCLEOTIDE SEQUENCE [LARGE SCALE GENOMIC DNA]</scope>
    <source>
        <strain>LT2 / SGSC1412 / ATCC 700720</strain>
    </source>
</reference>
<protein>
    <recommendedName>
        <fullName>Cobalt-precorrin-6A reductase</fullName>
        <ecNumber>1.3.1.106</ecNumber>
    </recommendedName>
</protein>